<protein>
    <recommendedName>
        <fullName evidence="1">LPS-assembly protein LptD</fullName>
    </recommendedName>
</protein>
<organism>
    <name type="scientific">Xanthomonas campestris pv. campestris (strain ATCC 33913 / DSM 3586 / NCPPB 528 / LMG 568 / P 25)</name>
    <dbReference type="NCBI Taxonomy" id="190485"/>
    <lineage>
        <taxon>Bacteria</taxon>
        <taxon>Pseudomonadati</taxon>
        <taxon>Pseudomonadota</taxon>
        <taxon>Gammaproteobacteria</taxon>
        <taxon>Lysobacterales</taxon>
        <taxon>Lysobacteraceae</taxon>
        <taxon>Xanthomonas</taxon>
    </lineage>
</organism>
<name>LPTD_XANCP</name>
<dbReference type="EMBL" id="AE008922">
    <property type="protein sequence ID" value="AAM40109.1"/>
    <property type="molecule type" value="Genomic_DNA"/>
</dbReference>
<dbReference type="RefSeq" id="NP_636185.1">
    <property type="nucleotide sequence ID" value="NC_003902.1"/>
</dbReference>
<dbReference type="RefSeq" id="WP_011036030.1">
    <property type="nucleotide sequence ID" value="NC_003902.1"/>
</dbReference>
<dbReference type="SMR" id="Q8PCE0"/>
<dbReference type="STRING" id="190485.XCC0794"/>
<dbReference type="EnsemblBacteria" id="AAM40109">
    <property type="protein sequence ID" value="AAM40109"/>
    <property type="gene ID" value="XCC0794"/>
</dbReference>
<dbReference type="KEGG" id="xcc:XCC0794"/>
<dbReference type="PATRIC" id="fig|190485.4.peg.864"/>
<dbReference type="eggNOG" id="COG1452">
    <property type="taxonomic scope" value="Bacteria"/>
</dbReference>
<dbReference type="HOGENOM" id="CLU_009039_0_0_6"/>
<dbReference type="OrthoDB" id="9760225at2"/>
<dbReference type="Proteomes" id="UP000001010">
    <property type="component" value="Chromosome"/>
</dbReference>
<dbReference type="GO" id="GO:0009279">
    <property type="term" value="C:cell outer membrane"/>
    <property type="evidence" value="ECO:0000318"/>
    <property type="project" value="GO_Central"/>
</dbReference>
<dbReference type="GO" id="GO:1990351">
    <property type="term" value="C:transporter complex"/>
    <property type="evidence" value="ECO:0000318"/>
    <property type="project" value="GO_Central"/>
</dbReference>
<dbReference type="GO" id="GO:0043165">
    <property type="term" value="P:Gram-negative-bacterium-type cell outer membrane assembly"/>
    <property type="evidence" value="ECO:0007669"/>
    <property type="project" value="UniProtKB-UniRule"/>
</dbReference>
<dbReference type="GO" id="GO:0015920">
    <property type="term" value="P:lipopolysaccharide transport"/>
    <property type="evidence" value="ECO:0007669"/>
    <property type="project" value="InterPro"/>
</dbReference>
<dbReference type="HAMAP" id="MF_01411">
    <property type="entry name" value="LPS_assembly_LptD"/>
    <property type="match status" value="1"/>
</dbReference>
<dbReference type="InterPro" id="IPR020889">
    <property type="entry name" value="LipoPS_assembly_LptD"/>
</dbReference>
<dbReference type="InterPro" id="IPR050218">
    <property type="entry name" value="LptD"/>
</dbReference>
<dbReference type="InterPro" id="IPR007543">
    <property type="entry name" value="LptD_C"/>
</dbReference>
<dbReference type="InterPro" id="IPR005653">
    <property type="entry name" value="OstA-like_N"/>
</dbReference>
<dbReference type="NCBIfam" id="NF003358">
    <property type="entry name" value="PRK04423.1"/>
    <property type="match status" value="1"/>
</dbReference>
<dbReference type="PANTHER" id="PTHR30189">
    <property type="entry name" value="LPS-ASSEMBLY PROTEIN"/>
    <property type="match status" value="1"/>
</dbReference>
<dbReference type="PANTHER" id="PTHR30189:SF1">
    <property type="entry name" value="LPS-ASSEMBLY PROTEIN LPTD"/>
    <property type="match status" value="1"/>
</dbReference>
<dbReference type="Pfam" id="PF04453">
    <property type="entry name" value="LptD"/>
    <property type="match status" value="1"/>
</dbReference>
<dbReference type="Pfam" id="PF03968">
    <property type="entry name" value="LptD_N"/>
    <property type="match status" value="1"/>
</dbReference>
<gene>
    <name evidence="1" type="primary">lptD</name>
    <name type="synonym">imp</name>
    <name type="synonym">ostA</name>
    <name type="ordered locus">XCC0794</name>
</gene>
<feature type="signal peptide" evidence="1">
    <location>
        <begin position="1"/>
        <end position="22"/>
    </location>
</feature>
<feature type="chain" id="PRO_0000020297" description="LPS-assembly protein LptD">
    <location>
        <begin position="23"/>
        <end position="809"/>
    </location>
</feature>
<keyword id="KW-0998">Cell outer membrane</keyword>
<keyword id="KW-0472">Membrane</keyword>
<keyword id="KW-1185">Reference proteome</keyword>
<keyword id="KW-0732">Signal</keyword>
<sequence>MRRALRLLPLPLSIAICLPAMAADKPLNWGLCPAVDPLPGFDGAPAADPKAAEIRQQLPTDIEGDQLSGTSTTPQYQGNVALKRGDQFLGADNLRMDTETGNYIAEGNVRYQDTSFRMVADRAEGNQDTDSHKVTNIQYQLVDRRGNGGAESVDLQGQVGQMHRSTYTTCDPSQPIWRVRAPEIDVDNDEGFGTARNAVLQIGKVPVLYFPWFKFPIDDRRMTGLLFPQFGLSGRNGFDYLQPIYLNLAPNYDATLLPRYMSRRGFMFGTEFRYLYDGGRGEITGNYLPNDNLRKKDRGSVFYSGYHNVNRYWQARSSISWVSDTRYVEDFTSRINGMGSASSIQSTVGIYGTGETWTAGLMADRWQLTDYTLDERSLPYNRQPRAYFTWEKPFGIFEAGVYAEAVRFTHDDSYLVQPPRDGNTNGDDGDDYVRTNIRNQEYGSGSRLDLKPYISMPLSGSAWFLTPTVAWRYTAYQLDSTLANTAPLTGDRSPTRSLPIASLDAGLYFDRETSLFGTKYLNTLEPRAYYLYVPYREQNDLPVFDTRPFTFSYGQLFRDTRYTGADRQNDANQLTLAVTSRWLRQDDGREKLSLSAGQILYFNDSLVTINNSTNAAAGSEQTIEQGKSAWVADANYMINDRWSMGATYQWNPNSRKEDLASLRTRYLLNNDGIINLAYRYRRNLIDESDQLKQADFSFLYPINPTWSAVGRYYYSLLDRKPLEIIGGVQWDSCCLAVRALVRRFVRNRDGEMDNSIQFEFVLKGLSSFGQNTDRTLRRAILGYYRDDLYLVPPSNTTTNPDDYDPNLIP</sequence>
<accession>Q8PCE0</accession>
<proteinExistence type="inferred from homology"/>
<evidence type="ECO:0000255" key="1">
    <source>
        <dbReference type="HAMAP-Rule" id="MF_01411"/>
    </source>
</evidence>
<reference key="1">
    <citation type="journal article" date="2002" name="Nature">
        <title>Comparison of the genomes of two Xanthomonas pathogens with differing host specificities.</title>
        <authorList>
            <person name="da Silva A.C.R."/>
            <person name="Ferro J.A."/>
            <person name="Reinach F.C."/>
            <person name="Farah C.S."/>
            <person name="Furlan L.R."/>
            <person name="Quaggio R.B."/>
            <person name="Monteiro-Vitorello C.B."/>
            <person name="Van Sluys M.A."/>
            <person name="Almeida N.F. Jr."/>
            <person name="Alves L.M.C."/>
            <person name="do Amaral A.M."/>
            <person name="Bertolini M.C."/>
            <person name="Camargo L.E.A."/>
            <person name="Camarotte G."/>
            <person name="Cannavan F."/>
            <person name="Cardozo J."/>
            <person name="Chambergo F."/>
            <person name="Ciapina L.P."/>
            <person name="Cicarelli R.M.B."/>
            <person name="Coutinho L.L."/>
            <person name="Cursino-Santos J.R."/>
            <person name="El-Dorry H."/>
            <person name="Faria J.B."/>
            <person name="Ferreira A.J.S."/>
            <person name="Ferreira R.C.C."/>
            <person name="Ferro M.I.T."/>
            <person name="Formighieri E.F."/>
            <person name="Franco M.C."/>
            <person name="Greggio C.C."/>
            <person name="Gruber A."/>
            <person name="Katsuyama A.M."/>
            <person name="Kishi L.T."/>
            <person name="Leite R.P."/>
            <person name="Lemos E.G.M."/>
            <person name="Lemos M.V.F."/>
            <person name="Locali E.C."/>
            <person name="Machado M.A."/>
            <person name="Madeira A.M.B.N."/>
            <person name="Martinez-Rossi N.M."/>
            <person name="Martins E.C."/>
            <person name="Meidanis J."/>
            <person name="Menck C.F.M."/>
            <person name="Miyaki C.Y."/>
            <person name="Moon D.H."/>
            <person name="Moreira L.M."/>
            <person name="Novo M.T.M."/>
            <person name="Okura V.K."/>
            <person name="Oliveira M.C."/>
            <person name="Oliveira V.R."/>
            <person name="Pereira H.A."/>
            <person name="Rossi A."/>
            <person name="Sena J.A.D."/>
            <person name="Silva C."/>
            <person name="de Souza R.F."/>
            <person name="Spinola L.A.F."/>
            <person name="Takita M.A."/>
            <person name="Tamura R.E."/>
            <person name="Teixeira E.C."/>
            <person name="Tezza R.I.D."/>
            <person name="Trindade dos Santos M."/>
            <person name="Truffi D."/>
            <person name="Tsai S.M."/>
            <person name="White F.F."/>
            <person name="Setubal J.C."/>
            <person name="Kitajima J.P."/>
        </authorList>
    </citation>
    <scope>NUCLEOTIDE SEQUENCE [LARGE SCALE GENOMIC DNA]</scope>
    <source>
        <strain>ATCC 33913 / DSM 3586 / NCPPB 528 / LMG 568 / P 25</strain>
    </source>
</reference>
<comment type="function">
    <text evidence="1">Together with LptE, is involved in the assembly of lipopolysaccharide (LPS) at the surface of the outer membrane.</text>
</comment>
<comment type="subunit">
    <text evidence="1">Component of the lipopolysaccharide transport and assembly complex. Interacts with LptE and LptA.</text>
</comment>
<comment type="subcellular location">
    <subcellularLocation>
        <location evidence="1">Cell outer membrane</location>
    </subcellularLocation>
</comment>
<comment type="similarity">
    <text evidence="1">Belongs to the LptD family.</text>
</comment>